<protein>
    <recommendedName>
        <fullName>Uncharacterized protein ORF137</fullName>
    </recommendedName>
</protein>
<sequence>MASQKNSESLVGELVNQINELYLTNPNQVIKLAKKAGVENPTFLVKPPTKPTNELSFAKLNNIAETVEKLEKYGLPSLLRQYFMTVVKNPAVIDNVVETYYKIAKIIPKEVENKEPLVISEKEGFVSKSIPPVIKVS</sequence>
<organismHost>
    <name type="scientific">Acidianus convivator</name>
    <dbReference type="NCBI Taxonomy" id="269667"/>
</organismHost>
<dbReference type="EMBL" id="AJ888457">
    <property type="protein sequence ID" value="CAI59865.1"/>
    <property type="molecule type" value="Genomic_DNA"/>
</dbReference>
<dbReference type="RefSeq" id="YP_319870.1">
    <property type="nucleotide sequence ID" value="NC_007409.1"/>
</dbReference>
<dbReference type="SMR" id="Q3V4U9"/>
<dbReference type="GeneID" id="4484240"/>
<dbReference type="KEGG" id="vg:4484240"/>
<dbReference type="Proteomes" id="UP000002150">
    <property type="component" value="Genome"/>
</dbReference>
<proteinExistence type="predicted"/>
<reference key="1">
    <citation type="journal article" date="2005" name="Nature">
        <title>Virology: independent virus development outside a host.</title>
        <authorList>
            <person name="Haring M."/>
            <person name="Vestergaard G."/>
            <person name="Rachel R."/>
            <person name="Chen L."/>
            <person name="Garrett R.A."/>
            <person name="Prangishvili D."/>
        </authorList>
    </citation>
    <scope>NUCLEOTIDE SEQUENCE [GENOMIC DNA]</scope>
</reference>
<accession>Q3V4U9</accession>
<organism>
    <name type="scientific">Acidianus two-tailed virus</name>
    <name type="common">ATV</name>
    <dbReference type="NCBI Taxonomy" id="315953"/>
    <lineage>
        <taxon>Viruses</taxon>
        <taxon>Viruses incertae sedis</taxon>
        <taxon>Bicaudaviridae</taxon>
        <taxon>Bicaudavirus</taxon>
    </lineage>
</organism>
<name>Y137_ATV</name>
<feature type="chain" id="PRO_0000389090" description="Uncharacterized protein ORF137">
    <location>
        <begin position="1"/>
        <end position="137"/>
    </location>
</feature>
<keyword id="KW-1185">Reference proteome</keyword>